<feature type="chain" id="PRO_0000174924" description="10 kDa chaperonin">
    <location>
        <begin position="1"/>
        <end position="98"/>
    </location>
</feature>
<proteinExistence type="inferred from homology"/>
<dbReference type="EMBL" id="U65890">
    <property type="protein sequence ID" value="AAB07452.1"/>
    <property type="molecule type" value="mRNA"/>
</dbReference>
<dbReference type="SMR" id="Q96539"/>
<dbReference type="GO" id="GO:0005737">
    <property type="term" value="C:cytoplasm"/>
    <property type="evidence" value="ECO:0007669"/>
    <property type="project" value="UniProtKB-SubCell"/>
</dbReference>
<dbReference type="GO" id="GO:0005524">
    <property type="term" value="F:ATP binding"/>
    <property type="evidence" value="ECO:0007669"/>
    <property type="project" value="InterPro"/>
</dbReference>
<dbReference type="GO" id="GO:0044183">
    <property type="term" value="F:protein folding chaperone"/>
    <property type="evidence" value="ECO:0007669"/>
    <property type="project" value="InterPro"/>
</dbReference>
<dbReference type="CDD" id="cd00320">
    <property type="entry name" value="cpn10"/>
    <property type="match status" value="1"/>
</dbReference>
<dbReference type="FunFam" id="2.30.33.40:FF:000002">
    <property type="entry name" value="10 kDa chaperonin, mitochondrial"/>
    <property type="match status" value="1"/>
</dbReference>
<dbReference type="Gene3D" id="2.30.33.40">
    <property type="entry name" value="GroES chaperonin"/>
    <property type="match status" value="1"/>
</dbReference>
<dbReference type="InterPro" id="IPR020818">
    <property type="entry name" value="Chaperonin_GroES"/>
</dbReference>
<dbReference type="InterPro" id="IPR037124">
    <property type="entry name" value="Chaperonin_GroES_sf"/>
</dbReference>
<dbReference type="InterPro" id="IPR018369">
    <property type="entry name" value="Chaprnonin_Cpn10_CS"/>
</dbReference>
<dbReference type="InterPro" id="IPR011032">
    <property type="entry name" value="GroES-like_sf"/>
</dbReference>
<dbReference type="PANTHER" id="PTHR10772">
    <property type="entry name" value="10 KDA HEAT SHOCK PROTEIN"/>
    <property type="match status" value="1"/>
</dbReference>
<dbReference type="PANTHER" id="PTHR10772:SF0">
    <property type="entry name" value="10 KDA HEAT SHOCK PROTEIN, MITOCHONDRIAL"/>
    <property type="match status" value="1"/>
</dbReference>
<dbReference type="Pfam" id="PF00166">
    <property type="entry name" value="Cpn10"/>
    <property type="match status" value="1"/>
</dbReference>
<dbReference type="PRINTS" id="PR00297">
    <property type="entry name" value="CHAPERONIN10"/>
</dbReference>
<dbReference type="SMART" id="SM00883">
    <property type="entry name" value="Cpn10"/>
    <property type="match status" value="1"/>
</dbReference>
<dbReference type="SUPFAM" id="SSF50129">
    <property type="entry name" value="GroES-like"/>
    <property type="match status" value="1"/>
</dbReference>
<dbReference type="PROSITE" id="PS00681">
    <property type="entry name" value="CHAPERONINS_CPN10"/>
    <property type="match status" value="1"/>
</dbReference>
<accession>Q96539</accession>
<reference key="1">
    <citation type="submission" date="1996-09" db="EMBL/GenBank/DDBJ databases">
        <title>Cloning and sequencing of a full length cDNA encoding the 10 kDa chaperonin from Brassica napus.</title>
        <authorList>
            <person name="Hussain A."/>
            <person name="Keller W.A."/>
            <person name="Georges F."/>
        </authorList>
    </citation>
    <scope>NUCLEOTIDE SEQUENCE [MRNA]</scope>
</reference>
<evidence type="ECO:0000305" key="1"/>
<sequence>MMKRLIPTFNRILVQGVIQPAKTESGILLPEKASKLNSGKVIAVGPGSRDKDGKLIPVSVKEGDTVLLPEYGGTQVKLGEKEYHLFRDEDVLGTLHED</sequence>
<protein>
    <recommendedName>
        <fullName>10 kDa chaperonin</fullName>
    </recommendedName>
    <alternativeName>
        <fullName>Chaperonin 10</fullName>
        <shortName>CPN10</shortName>
    </alternativeName>
    <alternativeName>
        <fullName>Protein groES</fullName>
    </alternativeName>
</protein>
<keyword id="KW-0143">Chaperone</keyword>
<keyword id="KW-0963">Cytoplasm</keyword>
<organism>
    <name type="scientific">Brassica napus</name>
    <name type="common">Rape</name>
    <dbReference type="NCBI Taxonomy" id="3708"/>
    <lineage>
        <taxon>Eukaryota</taxon>
        <taxon>Viridiplantae</taxon>
        <taxon>Streptophyta</taxon>
        <taxon>Embryophyta</taxon>
        <taxon>Tracheophyta</taxon>
        <taxon>Spermatophyta</taxon>
        <taxon>Magnoliopsida</taxon>
        <taxon>eudicotyledons</taxon>
        <taxon>Gunneridae</taxon>
        <taxon>Pentapetalae</taxon>
        <taxon>rosids</taxon>
        <taxon>malvids</taxon>
        <taxon>Brassicales</taxon>
        <taxon>Brassicaceae</taxon>
        <taxon>Brassiceae</taxon>
        <taxon>Brassica</taxon>
    </lineage>
</organism>
<comment type="function">
    <text>Seems to function only as a co-chaperone, along with cpn60, and in certain cases is essential for the discharge of biologically active proteins from cpn60.</text>
</comment>
<comment type="subunit">
    <text>Forms stable complexes with CPN60 in the presence of ATP.</text>
</comment>
<comment type="subcellular location">
    <subcellularLocation>
        <location evidence="1">Cytoplasm</location>
    </subcellularLocation>
</comment>
<comment type="similarity">
    <text evidence="1">Belongs to the GroES chaperonin family.</text>
</comment>
<name>CH10_BRANA</name>